<comment type="function">
    <text evidence="1">The glycine cleavage system catalyzes the degradation of glycine. The H protein shuttles the methylamine group of glycine from the P protein to the T protein.</text>
</comment>
<comment type="cofactor">
    <cofactor evidence="1">
        <name>(R)-lipoate</name>
        <dbReference type="ChEBI" id="CHEBI:83088"/>
    </cofactor>
    <text evidence="1">Binds 1 lipoyl cofactor covalently.</text>
</comment>
<comment type="subunit">
    <text evidence="1">The glycine cleavage system is composed of four proteins: P, T, L and H.</text>
</comment>
<comment type="similarity">
    <text evidence="1">Belongs to the GcvH family.</text>
</comment>
<keyword id="KW-0450">Lipoyl</keyword>
<keyword id="KW-1185">Reference proteome</keyword>
<reference key="1">
    <citation type="submission" date="2007-08" db="EMBL/GenBank/DDBJ databases">
        <title>Complete sequence of Shewanella sediminis HAW-EB3.</title>
        <authorList>
            <consortium name="US DOE Joint Genome Institute"/>
            <person name="Copeland A."/>
            <person name="Lucas S."/>
            <person name="Lapidus A."/>
            <person name="Barry K."/>
            <person name="Glavina del Rio T."/>
            <person name="Dalin E."/>
            <person name="Tice H."/>
            <person name="Pitluck S."/>
            <person name="Chertkov O."/>
            <person name="Brettin T."/>
            <person name="Bruce D."/>
            <person name="Detter J.C."/>
            <person name="Han C."/>
            <person name="Schmutz J."/>
            <person name="Larimer F."/>
            <person name="Land M."/>
            <person name="Hauser L."/>
            <person name="Kyrpides N."/>
            <person name="Kim E."/>
            <person name="Zhao J.-S."/>
            <person name="Richardson P."/>
        </authorList>
    </citation>
    <scope>NUCLEOTIDE SEQUENCE [LARGE SCALE GENOMIC DNA]</scope>
    <source>
        <strain>HAW-EB3</strain>
    </source>
</reference>
<organism>
    <name type="scientific">Shewanella sediminis (strain HAW-EB3)</name>
    <dbReference type="NCBI Taxonomy" id="425104"/>
    <lineage>
        <taxon>Bacteria</taxon>
        <taxon>Pseudomonadati</taxon>
        <taxon>Pseudomonadota</taxon>
        <taxon>Gammaproteobacteria</taxon>
        <taxon>Alteromonadales</taxon>
        <taxon>Shewanellaceae</taxon>
        <taxon>Shewanella</taxon>
    </lineage>
</organism>
<accession>A8FZK5</accession>
<sequence length="129" mass="13930">MSNIPAELKYASSHEWIRKEEDGSYTVGISEHAQELLGDMVFIELPDVGDTLSAGEDCAVAESVKAASDIYAPLSGEVLAINEALEDSPELVNSDAFGDGWFFRVMPSDVAEIDSLLDAEGYQAVIDEE</sequence>
<dbReference type="EMBL" id="CP000821">
    <property type="protein sequence ID" value="ABV38278.1"/>
    <property type="molecule type" value="Genomic_DNA"/>
</dbReference>
<dbReference type="RefSeq" id="WP_012144008.1">
    <property type="nucleotide sequence ID" value="NC_009831.1"/>
</dbReference>
<dbReference type="SMR" id="A8FZK5"/>
<dbReference type="STRING" id="425104.Ssed_3674"/>
<dbReference type="KEGG" id="sse:Ssed_3674"/>
<dbReference type="eggNOG" id="COG0509">
    <property type="taxonomic scope" value="Bacteria"/>
</dbReference>
<dbReference type="HOGENOM" id="CLU_097408_2_1_6"/>
<dbReference type="OrthoDB" id="9796712at2"/>
<dbReference type="Proteomes" id="UP000002015">
    <property type="component" value="Chromosome"/>
</dbReference>
<dbReference type="GO" id="GO:0005829">
    <property type="term" value="C:cytosol"/>
    <property type="evidence" value="ECO:0007669"/>
    <property type="project" value="TreeGrafter"/>
</dbReference>
<dbReference type="GO" id="GO:0005960">
    <property type="term" value="C:glycine cleavage complex"/>
    <property type="evidence" value="ECO:0007669"/>
    <property type="project" value="InterPro"/>
</dbReference>
<dbReference type="GO" id="GO:0019464">
    <property type="term" value="P:glycine decarboxylation via glycine cleavage system"/>
    <property type="evidence" value="ECO:0007669"/>
    <property type="project" value="UniProtKB-UniRule"/>
</dbReference>
<dbReference type="CDD" id="cd06848">
    <property type="entry name" value="GCS_H"/>
    <property type="match status" value="1"/>
</dbReference>
<dbReference type="FunFam" id="2.40.50.100:FF:000011">
    <property type="entry name" value="Glycine cleavage system H protein"/>
    <property type="match status" value="1"/>
</dbReference>
<dbReference type="Gene3D" id="2.40.50.100">
    <property type="match status" value="1"/>
</dbReference>
<dbReference type="HAMAP" id="MF_00272">
    <property type="entry name" value="GcvH"/>
    <property type="match status" value="1"/>
</dbReference>
<dbReference type="InterPro" id="IPR003016">
    <property type="entry name" value="2-oxoA_DH_lipoyl-BS"/>
</dbReference>
<dbReference type="InterPro" id="IPR000089">
    <property type="entry name" value="Biotin_lipoyl"/>
</dbReference>
<dbReference type="InterPro" id="IPR002930">
    <property type="entry name" value="GCV_H"/>
</dbReference>
<dbReference type="InterPro" id="IPR033753">
    <property type="entry name" value="GCV_H/Fam206"/>
</dbReference>
<dbReference type="InterPro" id="IPR017453">
    <property type="entry name" value="GCV_H_sub"/>
</dbReference>
<dbReference type="InterPro" id="IPR011053">
    <property type="entry name" value="Single_hybrid_motif"/>
</dbReference>
<dbReference type="NCBIfam" id="TIGR00527">
    <property type="entry name" value="gcvH"/>
    <property type="match status" value="1"/>
</dbReference>
<dbReference type="NCBIfam" id="NF002270">
    <property type="entry name" value="PRK01202.1"/>
    <property type="match status" value="1"/>
</dbReference>
<dbReference type="PANTHER" id="PTHR11715">
    <property type="entry name" value="GLYCINE CLEAVAGE SYSTEM H PROTEIN"/>
    <property type="match status" value="1"/>
</dbReference>
<dbReference type="PANTHER" id="PTHR11715:SF3">
    <property type="entry name" value="GLYCINE CLEAVAGE SYSTEM H PROTEIN-RELATED"/>
    <property type="match status" value="1"/>
</dbReference>
<dbReference type="Pfam" id="PF01597">
    <property type="entry name" value="GCV_H"/>
    <property type="match status" value="1"/>
</dbReference>
<dbReference type="SUPFAM" id="SSF51230">
    <property type="entry name" value="Single hybrid motif"/>
    <property type="match status" value="1"/>
</dbReference>
<dbReference type="PROSITE" id="PS50968">
    <property type="entry name" value="BIOTINYL_LIPOYL"/>
    <property type="match status" value="1"/>
</dbReference>
<dbReference type="PROSITE" id="PS00189">
    <property type="entry name" value="LIPOYL"/>
    <property type="match status" value="1"/>
</dbReference>
<name>GCSH_SHESH</name>
<feature type="chain" id="PRO_1000078742" description="Glycine cleavage system H protein">
    <location>
        <begin position="1"/>
        <end position="129"/>
    </location>
</feature>
<feature type="domain" description="Lipoyl-binding" evidence="2">
    <location>
        <begin position="24"/>
        <end position="106"/>
    </location>
</feature>
<feature type="modified residue" description="N6-lipoyllysine" evidence="1">
    <location>
        <position position="65"/>
    </location>
</feature>
<evidence type="ECO:0000255" key="1">
    <source>
        <dbReference type="HAMAP-Rule" id="MF_00272"/>
    </source>
</evidence>
<evidence type="ECO:0000255" key="2">
    <source>
        <dbReference type="PROSITE-ProRule" id="PRU01066"/>
    </source>
</evidence>
<protein>
    <recommendedName>
        <fullName evidence="1">Glycine cleavage system H protein</fullName>
    </recommendedName>
</protein>
<proteinExistence type="inferred from homology"/>
<gene>
    <name evidence="1" type="primary">gcvH</name>
    <name type="ordered locus">Ssed_3674</name>
</gene>